<evidence type="ECO:0000255" key="1">
    <source>
        <dbReference type="HAMAP-Rule" id="MF_00537"/>
    </source>
</evidence>
<evidence type="ECO:0000305" key="2"/>
<gene>
    <name evidence="1" type="primary">rps14</name>
    <name type="ordered locus">GuabCp019</name>
</gene>
<comment type="function">
    <text evidence="1">Binds 16S rRNA, required for the assembly of 30S particles.</text>
</comment>
<comment type="subunit">
    <text evidence="1">Part of the 30S ribosomal subunit.</text>
</comment>
<comment type="subcellular location">
    <subcellularLocation>
        <location>Plastid</location>
        <location>Chloroplast</location>
    </subcellularLocation>
</comment>
<comment type="similarity">
    <text evidence="1">Belongs to the universal ribosomal protein uS14 family.</text>
</comment>
<protein>
    <recommendedName>
        <fullName evidence="1">Small ribosomal subunit protein uS14c</fullName>
    </recommendedName>
    <alternativeName>
        <fullName evidence="2">30S ribosomal protein S14, chloroplastic</fullName>
    </alternativeName>
</protein>
<accession>B2LMJ1</accession>
<sequence length="100" mass="11775">MAKKSLIQREKKRQKLEQKYHLIRRSSKKEISKVRSLSDKWEIYGKLQSPPRNSAPTRLHRRCFSTGRPRANYRDFGLSGHILREMVHACLLPGATRSSW</sequence>
<reference key="1">
    <citation type="submission" date="2008-03" db="EMBL/GenBank/DDBJ databases">
        <title>Guizotia abyssinica chloroplast sequenced using Solexa.</title>
        <authorList>
            <person name="Kane N.C."/>
            <person name="Dempewolf H."/>
            <person name="Stewart M.L."/>
            <person name="Cronk Q."/>
            <person name="Rieseberrg L.H."/>
        </authorList>
    </citation>
    <scope>NUCLEOTIDE SEQUENCE [LARGE SCALE GENOMIC DNA]</scope>
    <source>
        <strain>cv. PI 508077</strain>
    </source>
</reference>
<feature type="chain" id="PRO_0000354417" description="Small ribosomal subunit protein uS14c">
    <location>
        <begin position="1"/>
        <end position="100"/>
    </location>
</feature>
<organism>
    <name type="scientific">Guizotia abyssinica</name>
    <name type="common">Niger</name>
    <name type="synonym">Ramtilla</name>
    <dbReference type="NCBI Taxonomy" id="4230"/>
    <lineage>
        <taxon>Eukaryota</taxon>
        <taxon>Viridiplantae</taxon>
        <taxon>Streptophyta</taxon>
        <taxon>Embryophyta</taxon>
        <taxon>Tracheophyta</taxon>
        <taxon>Spermatophyta</taxon>
        <taxon>Magnoliopsida</taxon>
        <taxon>eudicotyledons</taxon>
        <taxon>Gunneridae</taxon>
        <taxon>Pentapetalae</taxon>
        <taxon>asterids</taxon>
        <taxon>campanulids</taxon>
        <taxon>Asterales</taxon>
        <taxon>Asteraceae</taxon>
        <taxon>Asteroideae</taxon>
        <taxon>Heliantheae alliance</taxon>
        <taxon>Millerieae</taxon>
        <taxon>Guizotia</taxon>
    </lineage>
</organism>
<proteinExistence type="inferred from homology"/>
<dbReference type="EMBL" id="EU549769">
    <property type="protein sequence ID" value="ACB86525.1"/>
    <property type="molecule type" value="Genomic_DNA"/>
</dbReference>
<dbReference type="RefSeq" id="YP_001837358.1">
    <property type="nucleotide sequence ID" value="NC_010601.1"/>
</dbReference>
<dbReference type="SMR" id="B2LMJ1"/>
<dbReference type="GeneID" id="6219126"/>
<dbReference type="GO" id="GO:0009507">
    <property type="term" value="C:chloroplast"/>
    <property type="evidence" value="ECO:0007669"/>
    <property type="project" value="UniProtKB-SubCell"/>
</dbReference>
<dbReference type="GO" id="GO:0015935">
    <property type="term" value="C:small ribosomal subunit"/>
    <property type="evidence" value="ECO:0007669"/>
    <property type="project" value="TreeGrafter"/>
</dbReference>
<dbReference type="GO" id="GO:0019843">
    <property type="term" value="F:rRNA binding"/>
    <property type="evidence" value="ECO:0007669"/>
    <property type="project" value="UniProtKB-UniRule"/>
</dbReference>
<dbReference type="GO" id="GO:0003735">
    <property type="term" value="F:structural constituent of ribosome"/>
    <property type="evidence" value="ECO:0007669"/>
    <property type="project" value="InterPro"/>
</dbReference>
<dbReference type="GO" id="GO:0006412">
    <property type="term" value="P:translation"/>
    <property type="evidence" value="ECO:0007669"/>
    <property type="project" value="UniProtKB-UniRule"/>
</dbReference>
<dbReference type="FunFam" id="1.10.287.1480:FF:000001">
    <property type="entry name" value="30S ribosomal protein S14"/>
    <property type="match status" value="1"/>
</dbReference>
<dbReference type="Gene3D" id="1.10.287.1480">
    <property type="match status" value="1"/>
</dbReference>
<dbReference type="HAMAP" id="MF_00537">
    <property type="entry name" value="Ribosomal_uS14_1"/>
    <property type="match status" value="1"/>
</dbReference>
<dbReference type="InterPro" id="IPR001209">
    <property type="entry name" value="Ribosomal_uS14"/>
</dbReference>
<dbReference type="InterPro" id="IPR023036">
    <property type="entry name" value="Ribosomal_uS14_bac/plastid"/>
</dbReference>
<dbReference type="InterPro" id="IPR018271">
    <property type="entry name" value="Ribosomal_uS14_CS"/>
</dbReference>
<dbReference type="NCBIfam" id="NF006477">
    <property type="entry name" value="PRK08881.1"/>
    <property type="match status" value="1"/>
</dbReference>
<dbReference type="PANTHER" id="PTHR19836">
    <property type="entry name" value="30S RIBOSOMAL PROTEIN S14"/>
    <property type="match status" value="1"/>
</dbReference>
<dbReference type="PANTHER" id="PTHR19836:SF19">
    <property type="entry name" value="SMALL RIBOSOMAL SUBUNIT PROTEIN US14M"/>
    <property type="match status" value="1"/>
</dbReference>
<dbReference type="Pfam" id="PF00253">
    <property type="entry name" value="Ribosomal_S14"/>
    <property type="match status" value="1"/>
</dbReference>
<dbReference type="SUPFAM" id="SSF57716">
    <property type="entry name" value="Glucocorticoid receptor-like (DNA-binding domain)"/>
    <property type="match status" value="1"/>
</dbReference>
<dbReference type="PROSITE" id="PS00527">
    <property type="entry name" value="RIBOSOMAL_S14"/>
    <property type="match status" value="1"/>
</dbReference>
<keyword id="KW-0150">Chloroplast</keyword>
<keyword id="KW-0934">Plastid</keyword>
<keyword id="KW-0687">Ribonucleoprotein</keyword>
<keyword id="KW-0689">Ribosomal protein</keyword>
<keyword id="KW-0694">RNA-binding</keyword>
<keyword id="KW-0699">rRNA-binding</keyword>
<name>RR14_GUIAB</name>
<geneLocation type="chloroplast"/>